<name>LOLA_YERPS</name>
<comment type="function">
    <text evidence="1">Participates in the translocation of lipoproteins from the inner membrane to the outer membrane. Only forms a complex with a lipoprotein if the residue after the N-terminal Cys is not an aspartate (The Asp acts as a targeting signal to indicate that the lipoprotein should stay in the inner membrane).</text>
</comment>
<comment type="subunit">
    <text evidence="1">Monomer.</text>
</comment>
<comment type="subcellular location">
    <subcellularLocation>
        <location evidence="1">Periplasm</location>
    </subcellularLocation>
</comment>
<comment type="similarity">
    <text evidence="1">Belongs to the LolA family.</text>
</comment>
<feature type="signal peptide" evidence="1">
    <location>
        <begin position="1"/>
        <end position="21"/>
    </location>
</feature>
<feature type="chain" id="PRO_5000098606" description="Outer-membrane lipoprotein carrier protein">
    <location>
        <begin position="22"/>
        <end position="202"/>
    </location>
</feature>
<evidence type="ECO:0000255" key="1">
    <source>
        <dbReference type="HAMAP-Rule" id="MF_00240"/>
    </source>
</evidence>
<accession>Q66CK1</accession>
<keyword id="KW-0143">Chaperone</keyword>
<keyword id="KW-0574">Periplasm</keyword>
<keyword id="KW-0653">Protein transport</keyword>
<keyword id="KW-0732">Signal</keyword>
<keyword id="KW-0813">Transport</keyword>
<organism>
    <name type="scientific">Yersinia pseudotuberculosis serotype I (strain IP32953)</name>
    <dbReference type="NCBI Taxonomy" id="273123"/>
    <lineage>
        <taxon>Bacteria</taxon>
        <taxon>Pseudomonadati</taxon>
        <taxon>Pseudomonadota</taxon>
        <taxon>Gammaproteobacteria</taxon>
        <taxon>Enterobacterales</taxon>
        <taxon>Yersiniaceae</taxon>
        <taxon>Yersinia</taxon>
    </lineage>
</organism>
<sequence length="202" mass="22242">MKRLLVACCFLSGLISASALADASTDLQNRLSKVNSFHASFSQAVTSSDGAVVQEGEGELWVKRPNLFNWHMTSPDESVLISDGETLWFYNPFVEQATATWLKNATGNTPFMLITRNNPDDWKQYNVKQKGDDFELTPKSASGNLKQFAISVTPSGTIKSFTAVEQDGQRSAYTLKSQQSSVVDASKFTFTPPKGVTLDDQR</sequence>
<reference key="1">
    <citation type="journal article" date="2004" name="Proc. Natl. Acad. Sci. U.S.A.">
        <title>Insights into the evolution of Yersinia pestis through whole-genome comparison with Yersinia pseudotuberculosis.</title>
        <authorList>
            <person name="Chain P.S.G."/>
            <person name="Carniel E."/>
            <person name="Larimer F.W."/>
            <person name="Lamerdin J."/>
            <person name="Stoutland P.O."/>
            <person name="Regala W.M."/>
            <person name="Georgescu A.M."/>
            <person name="Vergez L.M."/>
            <person name="Land M.L."/>
            <person name="Motin V.L."/>
            <person name="Brubaker R.R."/>
            <person name="Fowler J."/>
            <person name="Hinnebusch J."/>
            <person name="Marceau M."/>
            <person name="Medigue C."/>
            <person name="Simonet M."/>
            <person name="Chenal-Francisque V."/>
            <person name="Souza B."/>
            <person name="Dacheux D."/>
            <person name="Elliott J.M."/>
            <person name="Derbise A."/>
            <person name="Hauser L.J."/>
            <person name="Garcia E."/>
        </authorList>
    </citation>
    <scope>NUCLEOTIDE SEQUENCE [LARGE SCALE GENOMIC DNA]</scope>
    <source>
        <strain>IP32953</strain>
    </source>
</reference>
<proteinExistence type="inferred from homology"/>
<protein>
    <recommendedName>
        <fullName evidence="1">Outer-membrane lipoprotein carrier protein</fullName>
    </recommendedName>
</protein>
<gene>
    <name evidence="1" type="primary">lolA</name>
    <name type="ordered locus">YPTB1402</name>
</gene>
<dbReference type="EMBL" id="BX936398">
    <property type="protein sequence ID" value="CAH20642.1"/>
    <property type="molecule type" value="Genomic_DNA"/>
</dbReference>
<dbReference type="RefSeq" id="WP_002211338.1">
    <property type="nucleotide sequence ID" value="NZ_CP009712.1"/>
</dbReference>
<dbReference type="SMR" id="Q66CK1"/>
<dbReference type="GeneID" id="57977173"/>
<dbReference type="KEGG" id="ypo:BZ17_1117"/>
<dbReference type="KEGG" id="yps:YPTB1402"/>
<dbReference type="PATRIC" id="fig|273123.14.peg.1184"/>
<dbReference type="Proteomes" id="UP000001011">
    <property type="component" value="Chromosome"/>
</dbReference>
<dbReference type="GO" id="GO:0030288">
    <property type="term" value="C:outer membrane-bounded periplasmic space"/>
    <property type="evidence" value="ECO:0007669"/>
    <property type="project" value="TreeGrafter"/>
</dbReference>
<dbReference type="GO" id="GO:0044874">
    <property type="term" value="P:lipoprotein localization to outer membrane"/>
    <property type="evidence" value="ECO:0007669"/>
    <property type="project" value="UniProtKB-UniRule"/>
</dbReference>
<dbReference type="GO" id="GO:0042953">
    <property type="term" value="P:lipoprotein transport"/>
    <property type="evidence" value="ECO:0007669"/>
    <property type="project" value="InterPro"/>
</dbReference>
<dbReference type="CDD" id="cd16325">
    <property type="entry name" value="LolA"/>
    <property type="match status" value="1"/>
</dbReference>
<dbReference type="FunFam" id="2.50.20.10:FF:000001">
    <property type="entry name" value="Outer-membrane lipoprotein carrier protein"/>
    <property type="match status" value="1"/>
</dbReference>
<dbReference type="Gene3D" id="2.50.20.10">
    <property type="entry name" value="Lipoprotein localisation LolA/LolB/LppX"/>
    <property type="match status" value="1"/>
</dbReference>
<dbReference type="HAMAP" id="MF_00240">
    <property type="entry name" value="LolA"/>
    <property type="match status" value="1"/>
</dbReference>
<dbReference type="InterPro" id="IPR029046">
    <property type="entry name" value="LolA/LolB/LppX"/>
</dbReference>
<dbReference type="InterPro" id="IPR004564">
    <property type="entry name" value="OM_lipoprot_carrier_LolA-like"/>
</dbReference>
<dbReference type="InterPro" id="IPR018323">
    <property type="entry name" value="OM_lipoprot_carrier_LolA_Pbac"/>
</dbReference>
<dbReference type="NCBIfam" id="TIGR00547">
    <property type="entry name" value="lolA"/>
    <property type="match status" value="1"/>
</dbReference>
<dbReference type="PANTHER" id="PTHR35869">
    <property type="entry name" value="OUTER-MEMBRANE LIPOPROTEIN CARRIER PROTEIN"/>
    <property type="match status" value="1"/>
</dbReference>
<dbReference type="PANTHER" id="PTHR35869:SF1">
    <property type="entry name" value="OUTER-MEMBRANE LIPOPROTEIN CARRIER PROTEIN"/>
    <property type="match status" value="1"/>
</dbReference>
<dbReference type="Pfam" id="PF03548">
    <property type="entry name" value="LolA"/>
    <property type="match status" value="1"/>
</dbReference>
<dbReference type="SUPFAM" id="SSF89392">
    <property type="entry name" value="Prokaryotic lipoproteins and lipoprotein localization factors"/>
    <property type="match status" value="1"/>
</dbReference>